<organism>
    <name type="scientific">Pyrobaculum aerophilum (strain ATCC 51768 / DSM 7523 / JCM 9630 / CIP 104966 / NBRC 100827 / IM2)</name>
    <dbReference type="NCBI Taxonomy" id="178306"/>
    <lineage>
        <taxon>Archaea</taxon>
        <taxon>Thermoproteota</taxon>
        <taxon>Thermoprotei</taxon>
        <taxon>Thermoproteales</taxon>
        <taxon>Thermoproteaceae</taxon>
        <taxon>Pyrobaculum</taxon>
    </lineage>
</organism>
<reference key="1">
    <citation type="journal article" date="2002" name="Proc. Natl. Acad. Sci. U.S.A.">
        <title>Genome sequence of the hyperthermophilic crenarchaeon Pyrobaculum aerophilum.</title>
        <authorList>
            <person name="Fitz-Gibbon S.T."/>
            <person name="Ladner H."/>
            <person name="Kim U.-J."/>
            <person name="Stetter K.O."/>
            <person name="Simon M.I."/>
            <person name="Miller J.H."/>
        </authorList>
    </citation>
    <scope>NUCLEOTIDE SEQUENCE [LARGE SCALE GENOMIC DNA]</scope>
    <source>
        <strain>ATCC 51768 / DSM 7523 / JCM 9630 / CIP 104966 / NBRC 100827 / IM2</strain>
    </source>
</reference>
<comment type="catalytic activity">
    <reaction evidence="2">
        <text>GTP + H2O = 7,8-dihydroneopterin 3'-triphosphate + formate + H(+)</text>
        <dbReference type="Rhea" id="RHEA:17473"/>
        <dbReference type="ChEBI" id="CHEBI:15377"/>
        <dbReference type="ChEBI" id="CHEBI:15378"/>
        <dbReference type="ChEBI" id="CHEBI:15740"/>
        <dbReference type="ChEBI" id="CHEBI:37565"/>
        <dbReference type="ChEBI" id="CHEBI:58462"/>
        <dbReference type="EC" id="3.5.4.16"/>
    </reaction>
</comment>
<comment type="pathway">
    <text evidence="2">Cofactor biosynthesis; 7,8-dihydroneopterin triphosphate biosynthesis; 7,8-dihydroneopterin triphosphate from GTP: step 1/1.</text>
</comment>
<comment type="subunit">
    <text evidence="1">Toroid-shaped homodecamer, composed of two pentamers of five dimers.</text>
</comment>
<comment type="similarity">
    <text evidence="2">Belongs to the GTP cyclohydrolase I family.</text>
</comment>
<evidence type="ECO:0000250" key="1"/>
<evidence type="ECO:0000255" key="2">
    <source>
        <dbReference type="HAMAP-Rule" id="MF_00223"/>
    </source>
</evidence>
<proteinExistence type="inferred from homology"/>
<keyword id="KW-0342">GTP-binding</keyword>
<keyword id="KW-0378">Hydrolase</keyword>
<keyword id="KW-0479">Metal-binding</keyword>
<keyword id="KW-0547">Nucleotide-binding</keyword>
<keyword id="KW-0554">One-carbon metabolism</keyword>
<keyword id="KW-1185">Reference proteome</keyword>
<keyword id="KW-0862">Zinc</keyword>
<sequence length="187" mass="21088">MITDRKAKAKPERGVEELLEYLGEDLTKPGVLNTPKRFVKAMEELTRGLREPPPEVVFFPLEYDVELGPVVIENIGAVSLCEHHLLPILLRISVAYVPGDGVPGLSKVIRLVKWAAARPIMQERFTEWLADLLMEKLRAKGVQVKVCGVHMCSFIRGVKDEHHNMITEARRGEIDVKLSCKRPLGCR</sequence>
<dbReference type="EC" id="3.5.4.16" evidence="2"/>
<dbReference type="EMBL" id="AE009441">
    <property type="protein sequence ID" value="AAL63584.1"/>
    <property type="molecule type" value="Genomic_DNA"/>
</dbReference>
<dbReference type="RefSeq" id="WP_011008057.1">
    <property type="nucleotide sequence ID" value="NC_003364.1"/>
</dbReference>
<dbReference type="SMR" id="Q8ZWW5"/>
<dbReference type="FunCoup" id="Q8ZWW5">
    <property type="interactions" value="99"/>
</dbReference>
<dbReference type="STRING" id="178306.PAE1588"/>
<dbReference type="EnsemblBacteria" id="AAL63584">
    <property type="protein sequence ID" value="AAL63584"/>
    <property type="gene ID" value="PAE1588"/>
</dbReference>
<dbReference type="GeneID" id="1465832"/>
<dbReference type="KEGG" id="pai:PAE1588"/>
<dbReference type="PATRIC" id="fig|178306.9.peg.1173"/>
<dbReference type="eggNOG" id="arCOG04542">
    <property type="taxonomic scope" value="Archaea"/>
</dbReference>
<dbReference type="HOGENOM" id="CLU_049768_3_3_2"/>
<dbReference type="InParanoid" id="Q8ZWW5"/>
<dbReference type="UniPathway" id="UPA00848">
    <property type="reaction ID" value="UER00151"/>
</dbReference>
<dbReference type="Proteomes" id="UP000002439">
    <property type="component" value="Chromosome"/>
</dbReference>
<dbReference type="GO" id="GO:0005737">
    <property type="term" value="C:cytoplasm"/>
    <property type="evidence" value="ECO:0000318"/>
    <property type="project" value="GO_Central"/>
</dbReference>
<dbReference type="GO" id="GO:0005525">
    <property type="term" value="F:GTP binding"/>
    <property type="evidence" value="ECO:0000318"/>
    <property type="project" value="GO_Central"/>
</dbReference>
<dbReference type="GO" id="GO:0003934">
    <property type="term" value="F:GTP cyclohydrolase I activity"/>
    <property type="evidence" value="ECO:0000318"/>
    <property type="project" value="GO_Central"/>
</dbReference>
<dbReference type="GO" id="GO:0008270">
    <property type="term" value="F:zinc ion binding"/>
    <property type="evidence" value="ECO:0000318"/>
    <property type="project" value="GO_Central"/>
</dbReference>
<dbReference type="GO" id="GO:0006730">
    <property type="term" value="P:one-carbon metabolic process"/>
    <property type="evidence" value="ECO:0007669"/>
    <property type="project" value="UniProtKB-UniRule"/>
</dbReference>
<dbReference type="GO" id="GO:0006729">
    <property type="term" value="P:tetrahydrobiopterin biosynthetic process"/>
    <property type="evidence" value="ECO:0000318"/>
    <property type="project" value="GO_Central"/>
</dbReference>
<dbReference type="GO" id="GO:0046654">
    <property type="term" value="P:tetrahydrofolate biosynthetic process"/>
    <property type="evidence" value="ECO:0007669"/>
    <property type="project" value="UniProtKB-UniRule"/>
</dbReference>
<dbReference type="FunFam" id="3.30.1130.10:FF:000001">
    <property type="entry name" value="GTP cyclohydrolase 1"/>
    <property type="match status" value="1"/>
</dbReference>
<dbReference type="Gene3D" id="1.10.286.10">
    <property type="match status" value="1"/>
</dbReference>
<dbReference type="Gene3D" id="3.30.1130.10">
    <property type="match status" value="1"/>
</dbReference>
<dbReference type="HAMAP" id="MF_00223">
    <property type="entry name" value="FolE"/>
    <property type="match status" value="1"/>
</dbReference>
<dbReference type="InterPro" id="IPR043133">
    <property type="entry name" value="GTP-CH-I_C/QueF"/>
</dbReference>
<dbReference type="InterPro" id="IPR043134">
    <property type="entry name" value="GTP-CH-I_N"/>
</dbReference>
<dbReference type="InterPro" id="IPR001474">
    <property type="entry name" value="GTP_CycHdrlase_I"/>
</dbReference>
<dbReference type="InterPro" id="IPR020602">
    <property type="entry name" value="GTP_CycHdrlase_I_dom"/>
</dbReference>
<dbReference type="NCBIfam" id="NF006826">
    <property type="entry name" value="PRK09347.1-3"/>
    <property type="match status" value="1"/>
</dbReference>
<dbReference type="PANTHER" id="PTHR11109:SF7">
    <property type="entry name" value="GTP CYCLOHYDROLASE 1"/>
    <property type="match status" value="1"/>
</dbReference>
<dbReference type="PANTHER" id="PTHR11109">
    <property type="entry name" value="GTP CYCLOHYDROLASE I"/>
    <property type="match status" value="1"/>
</dbReference>
<dbReference type="Pfam" id="PF01227">
    <property type="entry name" value="GTP_cyclohydroI"/>
    <property type="match status" value="1"/>
</dbReference>
<dbReference type="SUPFAM" id="SSF55620">
    <property type="entry name" value="Tetrahydrobiopterin biosynthesis enzymes-like"/>
    <property type="match status" value="1"/>
</dbReference>
<dbReference type="PROSITE" id="PS00859">
    <property type="entry name" value="GTP_CYCLOHYDROL_1_1"/>
    <property type="match status" value="1"/>
</dbReference>
<accession>Q8ZWW5</accession>
<feature type="chain" id="PRO_0000119473" description="GTP cyclohydrolase 1">
    <location>
        <begin position="1"/>
        <end position="187"/>
    </location>
</feature>
<feature type="binding site" evidence="2">
    <location>
        <position position="81"/>
    </location>
    <ligand>
        <name>Zn(2+)</name>
        <dbReference type="ChEBI" id="CHEBI:29105"/>
    </ligand>
</feature>
<feature type="binding site" evidence="2">
    <location>
        <position position="84"/>
    </location>
    <ligand>
        <name>Zn(2+)</name>
        <dbReference type="ChEBI" id="CHEBI:29105"/>
    </ligand>
</feature>
<feature type="binding site" evidence="2">
    <location>
        <position position="152"/>
    </location>
    <ligand>
        <name>Zn(2+)</name>
        <dbReference type="ChEBI" id="CHEBI:29105"/>
    </ligand>
</feature>
<protein>
    <recommendedName>
        <fullName evidence="2">GTP cyclohydrolase 1</fullName>
        <ecNumber evidence="2">3.5.4.16</ecNumber>
    </recommendedName>
    <alternativeName>
        <fullName evidence="2">GTP cyclohydrolase I</fullName>
        <shortName evidence="2">GTP-CH-I</shortName>
    </alternativeName>
</protein>
<name>GCH1_PYRAE</name>
<gene>
    <name evidence="2" type="primary">folE</name>
    <name type="ordered locus">PAE1588</name>
</gene>